<gene>
    <name evidence="1" type="primary">ureD</name>
    <name type="ordered locus">SAR2378</name>
</gene>
<sequence>MDEQQWTGQLDLTVFFDGNRSVSRDIFFEKALKVIRPVYLNQSTIPTFYIVNVGGGYLDGDRYRMNVNVEDNAKVTLTSQGATKIYKTPSNHVEQYQTFNLKDNAYLEYVADPIIAYENAKFYQHNTFNLNNSSSLFYTDILTPGYSKTGEAFKYQYMHLINEIYIEDELVTYDNLLLNPNKQSINEIGYMEHYSHYGSAYFIHEDVNQKLIDSVYETISSYSNTFDCRVAISQLPTHGFAVRIFAYRTQIIEKILGTIQSYIAENIYDRKLDFLRKY</sequence>
<reference key="1">
    <citation type="journal article" date="2004" name="Proc. Natl. Acad. Sci. U.S.A.">
        <title>Complete genomes of two clinical Staphylococcus aureus strains: evidence for the rapid evolution of virulence and drug resistance.</title>
        <authorList>
            <person name="Holden M.T.G."/>
            <person name="Feil E.J."/>
            <person name="Lindsay J.A."/>
            <person name="Peacock S.J."/>
            <person name="Day N.P.J."/>
            <person name="Enright M.C."/>
            <person name="Foster T.J."/>
            <person name="Moore C.E."/>
            <person name="Hurst L."/>
            <person name="Atkin R."/>
            <person name="Barron A."/>
            <person name="Bason N."/>
            <person name="Bentley S.D."/>
            <person name="Chillingworth C."/>
            <person name="Chillingworth T."/>
            <person name="Churcher C."/>
            <person name="Clark L."/>
            <person name="Corton C."/>
            <person name="Cronin A."/>
            <person name="Doggett J."/>
            <person name="Dowd L."/>
            <person name="Feltwell T."/>
            <person name="Hance Z."/>
            <person name="Harris B."/>
            <person name="Hauser H."/>
            <person name="Holroyd S."/>
            <person name="Jagels K."/>
            <person name="James K.D."/>
            <person name="Lennard N."/>
            <person name="Line A."/>
            <person name="Mayes R."/>
            <person name="Moule S."/>
            <person name="Mungall K."/>
            <person name="Ormond D."/>
            <person name="Quail M.A."/>
            <person name="Rabbinowitsch E."/>
            <person name="Rutherford K.M."/>
            <person name="Sanders M."/>
            <person name="Sharp S."/>
            <person name="Simmonds M."/>
            <person name="Stevens K."/>
            <person name="Whitehead S."/>
            <person name="Barrell B.G."/>
            <person name="Spratt B.G."/>
            <person name="Parkhill J."/>
        </authorList>
    </citation>
    <scope>NUCLEOTIDE SEQUENCE [LARGE SCALE GENOMIC DNA]</scope>
    <source>
        <strain>MRSA252</strain>
    </source>
</reference>
<dbReference type="EMBL" id="BX571856">
    <property type="protein sequence ID" value="CAG41359.1"/>
    <property type="molecule type" value="Genomic_DNA"/>
</dbReference>
<dbReference type="RefSeq" id="WP_000344352.1">
    <property type="nucleotide sequence ID" value="NC_002952.2"/>
</dbReference>
<dbReference type="SMR" id="Q6GEE0"/>
<dbReference type="KEGG" id="sar:SAR2378"/>
<dbReference type="HOGENOM" id="CLU_056339_5_0_9"/>
<dbReference type="Proteomes" id="UP000000596">
    <property type="component" value="Chromosome"/>
</dbReference>
<dbReference type="GO" id="GO:0005737">
    <property type="term" value="C:cytoplasm"/>
    <property type="evidence" value="ECO:0007669"/>
    <property type="project" value="UniProtKB-SubCell"/>
</dbReference>
<dbReference type="GO" id="GO:0016151">
    <property type="term" value="F:nickel cation binding"/>
    <property type="evidence" value="ECO:0007669"/>
    <property type="project" value="UniProtKB-UniRule"/>
</dbReference>
<dbReference type="HAMAP" id="MF_01384">
    <property type="entry name" value="UreD"/>
    <property type="match status" value="1"/>
</dbReference>
<dbReference type="InterPro" id="IPR002669">
    <property type="entry name" value="UreD"/>
</dbReference>
<dbReference type="PANTHER" id="PTHR33643">
    <property type="entry name" value="UREASE ACCESSORY PROTEIN D"/>
    <property type="match status" value="1"/>
</dbReference>
<dbReference type="PANTHER" id="PTHR33643:SF1">
    <property type="entry name" value="UREASE ACCESSORY PROTEIN D"/>
    <property type="match status" value="1"/>
</dbReference>
<dbReference type="Pfam" id="PF01774">
    <property type="entry name" value="UreD"/>
    <property type="match status" value="1"/>
</dbReference>
<feature type="chain" id="PRO_0000346598" description="Urease accessory protein UreD">
    <location>
        <begin position="1"/>
        <end position="278"/>
    </location>
</feature>
<organism>
    <name type="scientific">Staphylococcus aureus (strain MRSA252)</name>
    <dbReference type="NCBI Taxonomy" id="282458"/>
    <lineage>
        <taxon>Bacteria</taxon>
        <taxon>Bacillati</taxon>
        <taxon>Bacillota</taxon>
        <taxon>Bacilli</taxon>
        <taxon>Bacillales</taxon>
        <taxon>Staphylococcaceae</taxon>
        <taxon>Staphylococcus</taxon>
    </lineage>
</organism>
<name>URED_STAAR</name>
<comment type="function">
    <text evidence="1">Required for maturation of urease via the functional incorporation of the urease nickel metallocenter.</text>
</comment>
<comment type="subunit">
    <text evidence="1">UreD, UreF and UreG form a complex that acts as a GTP-hydrolysis-dependent molecular chaperone, activating the urease apoprotein by helping to assemble the nickel containing metallocenter of UreC. The UreE protein probably delivers the nickel.</text>
</comment>
<comment type="subcellular location">
    <subcellularLocation>
        <location evidence="1">Cytoplasm</location>
    </subcellularLocation>
</comment>
<comment type="similarity">
    <text evidence="1">Belongs to the UreD family.</text>
</comment>
<accession>Q6GEE0</accession>
<protein>
    <recommendedName>
        <fullName evidence="1">Urease accessory protein UreD</fullName>
    </recommendedName>
</protein>
<keyword id="KW-0143">Chaperone</keyword>
<keyword id="KW-0963">Cytoplasm</keyword>
<keyword id="KW-0996">Nickel insertion</keyword>
<evidence type="ECO:0000255" key="1">
    <source>
        <dbReference type="HAMAP-Rule" id="MF_01384"/>
    </source>
</evidence>
<proteinExistence type="inferred from homology"/>